<feature type="chain" id="PRO_1000197357" description="Undecaprenyl-diphosphatase">
    <location>
        <begin position="1"/>
        <end position="283"/>
    </location>
</feature>
<feature type="transmembrane region" description="Helical" evidence="1">
    <location>
        <begin position="40"/>
        <end position="60"/>
    </location>
</feature>
<feature type="transmembrane region" description="Helical" evidence="1">
    <location>
        <begin position="85"/>
        <end position="105"/>
    </location>
</feature>
<feature type="transmembrane region" description="Helical" evidence="1">
    <location>
        <begin position="113"/>
        <end position="133"/>
    </location>
</feature>
<feature type="transmembrane region" description="Helical" evidence="1">
    <location>
        <begin position="153"/>
        <end position="173"/>
    </location>
</feature>
<feature type="transmembrane region" description="Helical" evidence="1">
    <location>
        <begin position="193"/>
        <end position="213"/>
    </location>
</feature>
<feature type="transmembrane region" description="Helical" evidence="1">
    <location>
        <begin position="227"/>
        <end position="247"/>
    </location>
</feature>
<feature type="transmembrane region" description="Helical" evidence="1">
    <location>
        <begin position="259"/>
        <end position="279"/>
    </location>
</feature>
<name>UPPP_CHLL2</name>
<sequence>MNLFEAVILGIVQGLTEFLPISSTAHLRIIPALAGWKDPGAAFTAIVQIGTLAAVLIYFFRDITAIVREVVAGILKGRPLGTTEAKMGWMIAAGTIPIVIFGLLFKNEIETSLRSLYWISGALIGLALLLTIAEKRMKNQLRQGVTMKSMENIGWKDALLIGLIQSIALIPGSSRSGVTITGGLFLNLSRETAARFSFLLSLPSVLAAGVFQLYKSWDLIISSPDNLIAIIVATIVSGIVGYASIAFLLNYLKSHTTSVFIIYRLLLGSGILLMLATGMLPAT</sequence>
<gene>
    <name evidence="1" type="primary">uppP</name>
    <name type="ordered locus">Clim_1735</name>
</gene>
<protein>
    <recommendedName>
        <fullName evidence="1">Undecaprenyl-diphosphatase</fullName>
        <ecNumber evidence="1">3.6.1.27</ecNumber>
    </recommendedName>
    <alternativeName>
        <fullName evidence="1">Bacitracin resistance protein</fullName>
    </alternativeName>
    <alternativeName>
        <fullName evidence="1">Undecaprenyl pyrophosphate phosphatase</fullName>
    </alternativeName>
</protein>
<accession>B3EEG6</accession>
<proteinExistence type="inferred from homology"/>
<dbReference type="EC" id="3.6.1.27" evidence="1"/>
<dbReference type="EMBL" id="CP001097">
    <property type="protein sequence ID" value="ACD90776.1"/>
    <property type="molecule type" value="Genomic_DNA"/>
</dbReference>
<dbReference type="RefSeq" id="WP_012466649.1">
    <property type="nucleotide sequence ID" value="NC_010803.1"/>
</dbReference>
<dbReference type="SMR" id="B3EEG6"/>
<dbReference type="STRING" id="290315.Clim_1735"/>
<dbReference type="KEGG" id="cli:Clim_1735"/>
<dbReference type="eggNOG" id="COG1968">
    <property type="taxonomic scope" value="Bacteria"/>
</dbReference>
<dbReference type="HOGENOM" id="CLU_060296_1_0_10"/>
<dbReference type="OrthoDB" id="9808289at2"/>
<dbReference type="Proteomes" id="UP000008841">
    <property type="component" value="Chromosome"/>
</dbReference>
<dbReference type="GO" id="GO:0005886">
    <property type="term" value="C:plasma membrane"/>
    <property type="evidence" value="ECO:0007669"/>
    <property type="project" value="UniProtKB-SubCell"/>
</dbReference>
<dbReference type="GO" id="GO:0050380">
    <property type="term" value="F:undecaprenyl-diphosphatase activity"/>
    <property type="evidence" value="ECO:0007669"/>
    <property type="project" value="UniProtKB-UniRule"/>
</dbReference>
<dbReference type="GO" id="GO:0071555">
    <property type="term" value="P:cell wall organization"/>
    <property type="evidence" value="ECO:0007669"/>
    <property type="project" value="UniProtKB-KW"/>
</dbReference>
<dbReference type="GO" id="GO:0009252">
    <property type="term" value="P:peptidoglycan biosynthetic process"/>
    <property type="evidence" value="ECO:0007669"/>
    <property type="project" value="UniProtKB-KW"/>
</dbReference>
<dbReference type="GO" id="GO:0008360">
    <property type="term" value="P:regulation of cell shape"/>
    <property type="evidence" value="ECO:0007669"/>
    <property type="project" value="UniProtKB-KW"/>
</dbReference>
<dbReference type="GO" id="GO:0046677">
    <property type="term" value="P:response to antibiotic"/>
    <property type="evidence" value="ECO:0007669"/>
    <property type="project" value="UniProtKB-UniRule"/>
</dbReference>
<dbReference type="HAMAP" id="MF_01006">
    <property type="entry name" value="Undec_diphosphatase"/>
    <property type="match status" value="1"/>
</dbReference>
<dbReference type="InterPro" id="IPR003824">
    <property type="entry name" value="UppP"/>
</dbReference>
<dbReference type="NCBIfam" id="TIGR00753">
    <property type="entry name" value="undec_PP_bacA"/>
    <property type="match status" value="1"/>
</dbReference>
<dbReference type="PANTHER" id="PTHR30622">
    <property type="entry name" value="UNDECAPRENYL-DIPHOSPHATASE"/>
    <property type="match status" value="1"/>
</dbReference>
<dbReference type="PANTHER" id="PTHR30622:SF4">
    <property type="entry name" value="UNDECAPRENYL-DIPHOSPHATASE"/>
    <property type="match status" value="1"/>
</dbReference>
<dbReference type="Pfam" id="PF02673">
    <property type="entry name" value="BacA"/>
    <property type="match status" value="1"/>
</dbReference>
<reference key="1">
    <citation type="submission" date="2008-05" db="EMBL/GenBank/DDBJ databases">
        <title>Complete sequence of Chlorobium limicola DSM 245.</title>
        <authorList>
            <consortium name="US DOE Joint Genome Institute"/>
            <person name="Lucas S."/>
            <person name="Copeland A."/>
            <person name="Lapidus A."/>
            <person name="Glavina del Rio T."/>
            <person name="Dalin E."/>
            <person name="Tice H."/>
            <person name="Bruce D."/>
            <person name="Goodwin L."/>
            <person name="Pitluck S."/>
            <person name="Schmutz J."/>
            <person name="Larimer F."/>
            <person name="Land M."/>
            <person name="Hauser L."/>
            <person name="Kyrpides N."/>
            <person name="Ovchinnikova G."/>
            <person name="Zhao F."/>
            <person name="Li T."/>
            <person name="Liu Z."/>
            <person name="Overmann J."/>
            <person name="Bryant D.A."/>
            <person name="Richardson P."/>
        </authorList>
    </citation>
    <scope>NUCLEOTIDE SEQUENCE [LARGE SCALE GENOMIC DNA]</scope>
    <source>
        <strain>DSM 245 / NBRC 103803 / 6330</strain>
    </source>
</reference>
<organism>
    <name type="scientific">Chlorobium limicola (strain DSM 245 / NBRC 103803 / 6330)</name>
    <dbReference type="NCBI Taxonomy" id="290315"/>
    <lineage>
        <taxon>Bacteria</taxon>
        <taxon>Pseudomonadati</taxon>
        <taxon>Chlorobiota</taxon>
        <taxon>Chlorobiia</taxon>
        <taxon>Chlorobiales</taxon>
        <taxon>Chlorobiaceae</taxon>
        <taxon>Chlorobium/Pelodictyon group</taxon>
        <taxon>Chlorobium</taxon>
    </lineage>
</organism>
<evidence type="ECO:0000255" key="1">
    <source>
        <dbReference type="HAMAP-Rule" id="MF_01006"/>
    </source>
</evidence>
<comment type="function">
    <text evidence="1">Catalyzes the dephosphorylation of undecaprenyl diphosphate (UPP). Confers resistance to bacitracin.</text>
</comment>
<comment type="catalytic activity">
    <reaction evidence="1">
        <text>di-trans,octa-cis-undecaprenyl diphosphate + H2O = di-trans,octa-cis-undecaprenyl phosphate + phosphate + H(+)</text>
        <dbReference type="Rhea" id="RHEA:28094"/>
        <dbReference type="ChEBI" id="CHEBI:15377"/>
        <dbReference type="ChEBI" id="CHEBI:15378"/>
        <dbReference type="ChEBI" id="CHEBI:43474"/>
        <dbReference type="ChEBI" id="CHEBI:58405"/>
        <dbReference type="ChEBI" id="CHEBI:60392"/>
        <dbReference type="EC" id="3.6.1.27"/>
    </reaction>
</comment>
<comment type="subcellular location">
    <subcellularLocation>
        <location evidence="1">Cell inner membrane</location>
        <topology evidence="1">Multi-pass membrane protein</topology>
    </subcellularLocation>
</comment>
<comment type="miscellaneous">
    <text>Bacitracin is thought to be involved in the inhibition of peptidoglycan synthesis by sequestering undecaprenyl diphosphate, thereby reducing the pool of lipid carrier available.</text>
</comment>
<comment type="similarity">
    <text evidence="1">Belongs to the UppP family.</text>
</comment>
<keyword id="KW-0046">Antibiotic resistance</keyword>
<keyword id="KW-0997">Cell inner membrane</keyword>
<keyword id="KW-1003">Cell membrane</keyword>
<keyword id="KW-0133">Cell shape</keyword>
<keyword id="KW-0961">Cell wall biogenesis/degradation</keyword>
<keyword id="KW-0378">Hydrolase</keyword>
<keyword id="KW-0472">Membrane</keyword>
<keyword id="KW-0573">Peptidoglycan synthesis</keyword>
<keyword id="KW-0812">Transmembrane</keyword>
<keyword id="KW-1133">Transmembrane helix</keyword>